<evidence type="ECO:0000255" key="1">
    <source>
        <dbReference type="HAMAP-Rule" id="MF_00057"/>
    </source>
</evidence>
<feature type="chain" id="PRO_1000091883" description="3-deoxy-manno-octulosonate cytidylyltransferase">
    <location>
        <begin position="1"/>
        <end position="238"/>
    </location>
</feature>
<comment type="function">
    <text evidence="1">Activates KDO (a required 8-carbon sugar) for incorporation into bacterial lipopolysaccharide in Gram-negative bacteria.</text>
</comment>
<comment type="catalytic activity">
    <reaction evidence="1">
        <text>3-deoxy-alpha-D-manno-oct-2-ulosonate + CTP = CMP-3-deoxy-beta-D-manno-octulosonate + diphosphate</text>
        <dbReference type="Rhea" id="RHEA:23448"/>
        <dbReference type="ChEBI" id="CHEBI:33019"/>
        <dbReference type="ChEBI" id="CHEBI:37563"/>
        <dbReference type="ChEBI" id="CHEBI:85986"/>
        <dbReference type="ChEBI" id="CHEBI:85987"/>
        <dbReference type="EC" id="2.7.7.38"/>
    </reaction>
</comment>
<comment type="pathway">
    <text evidence="1">Nucleotide-sugar biosynthesis; CMP-3-deoxy-D-manno-octulosonate biosynthesis; CMP-3-deoxy-D-manno-octulosonate from 3-deoxy-D-manno-octulosonate and CTP: step 1/1.</text>
</comment>
<comment type="pathway">
    <text evidence="1">Bacterial outer membrane biogenesis; lipopolysaccharide biosynthesis.</text>
</comment>
<comment type="subcellular location">
    <subcellularLocation>
        <location evidence="1">Cytoplasm</location>
    </subcellularLocation>
</comment>
<comment type="similarity">
    <text evidence="1">Belongs to the KdsB family.</text>
</comment>
<name>KDSB_NITSB</name>
<organism>
    <name type="scientific">Nitratiruptor sp. (strain SB155-2)</name>
    <dbReference type="NCBI Taxonomy" id="387092"/>
    <lineage>
        <taxon>Bacteria</taxon>
        <taxon>Pseudomonadati</taxon>
        <taxon>Campylobacterota</taxon>
        <taxon>Epsilonproteobacteria</taxon>
        <taxon>Nautiliales</taxon>
        <taxon>Nitratiruptoraceae</taxon>
        <taxon>Nitratiruptor</taxon>
    </lineage>
</organism>
<reference key="1">
    <citation type="journal article" date="2007" name="Proc. Natl. Acad. Sci. U.S.A.">
        <title>Deep-sea vent epsilon-proteobacterial genomes provide insights into emergence of pathogens.</title>
        <authorList>
            <person name="Nakagawa S."/>
            <person name="Takaki Y."/>
            <person name="Shimamura S."/>
            <person name="Reysenbach A.-L."/>
            <person name="Takai K."/>
            <person name="Horikoshi K."/>
        </authorList>
    </citation>
    <scope>NUCLEOTIDE SEQUENCE [LARGE SCALE GENOMIC DNA]</scope>
    <source>
        <strain>SB155-2</strain>
    </source>
</reference>
<accession>A6Q3P4</accession>
<sequence length="238" mass="26675">MIIIPARLASTRFPRKVLHPINGIPMIIHTAQRASQVDEVVIATDSEEVMKIAKQYGFDAVLTSKTHESGTDRVNEAATLLGLDAKEIIINVQADEPLIEPQVIKKVKELTIKHTKSCEIMLCSAYKKISFDATNDPNSVKVVLDASDKALYFSRSQIPYPRSDVKTINIHLGIYGYTKEMLQKFCTLPTAPLEQIEKLEQLRALYHGYRIAMVEVTSQSIGIDTPEDLKKINASFFE</sequence>
<dbReference type="EC" id="2.7.7.38" evidence="1"/>
<dbReference type="EMBL" id="AP009178">
    <property type="protein sequence ID" value="BAF70103.1"/>
    <property type="molecule type" value="Genomic_DNA"/>
</dbReference>
<dbReference type="RefSeq" id="WP_012082366.1">
    <property type="nucleotide sequence ID" value="NC_009662.1"/>
</dbReference>
<dbReference type="SMR" id="A6Q3P4"/>
<dbReference type="FunCoup" id="A6Q3P4">
    <property type="interactions" value="387"/>
</dbReference>
<dbReference type="STRING" id="387092.NIS_0993"/>
<dbReference type="KEGG" id="nis:NIS_0993"/>
<dbReference type="eggNOG" id="COG1212">
    <property type="taxonomic scope" value="Bacteria"/>
</dbReference>
<dbReference type="HOGENOM" id="CLU_065038_0_1_7"/>
<dbReference type="InParanoid" id="A6Q3P4"/>
<dbReference type="OrthoDB" id="9815559at2"/>
<dbReference type="UniPathway" id="UPA00030"/>
<dbReference type="UniPathway" id="UPA00358">
    <property type="reaction ID" value="UER00476"/>
</dbReference>
<dbReference type="Proteomes" id="UP000001118">
    <property type="component" value="Chromosome"/>
</dbReference>
<dbReference type="GO" id="GO:0005829">
    <property type="term" value="C:cytosol"/>
    <property type="evidence" value="ECO:0007669"/>
    <property type="project" value="TreeGrafter"/>
</dbReference>
<dbReference type="GO" id="GO:0008690">
    <property type="term" value="F:3-deoxy-manno-octulosonate cytidylyltransferase activity"/>
    <property type="evidence" value="ECO:0007669"/>
    <property type="project" value="UniProtKB-UniRule"/>
</dbReference>
<dbReference type="GO" id="GO:0033468">
    <property type="term" value="P:CMP-keto-3-deoxy-D-manno-octulosonic acid biosynthetic process"/>
    <property type="evidence" value="ECO:0007669"/>
    <property type="project" value="UniProtKB-UniRule"/>
</dbReference>
<dbReference type="GO" id="GO:0009103">
    <property type="term" value="P:lipopolysaccharide biosynthetic process"/>
    <property type="evidence" value="ECO:0007669"/>
    <property type="project" value="UniProtKB-UniRule"/>
</dbReference>
<dbReference type="CDD" id="cd02517">
    <property type="entry name" value="CMP-KDO-Synthetase"/>
    <property type="match status" value="1"/>
</dbReference>
<dbReference type="Gene3D" id="3.90.550.10">
    <property type="entry name" value="Spore Coat Polysaccharide Biosynthesis Protein SpsA, Chain A"/>
    <property type="match status" value="1"/>
</dbReference>
<dbReference type="HAMAP" id="MF_00057">
    <property type="entry name" value="KdsB"/>
    <property type="match status" value="1"/>
</dbReference>
<dbReference type="InterPro" id="IPR003329">
    <property type="entry name" value="Cytidylyl_trans"/>
</dbReference>
<dbReference type="InterPro" id="IPR004528">
    <property type="entry name" value="KdsB"/>
</dbReference>
<dbReference type="InterPro" id="IPR029044">
    <property type="entry name" value="Nucleotide-diphossugar_trans"/>
</dbReference>
<dbReference type="NCBIfam" id="TIGR00466">
    <property type="entry name" value="kdsB"/>
    <property type="match status" value="1"/>
</dbReference>
<dbReference type="NCBIfam" id="NF003952">
    <property type="entry name" value="PRK05450.1-5"/>
    <property type="match status" value="1"/>
</dbReference>
<dbReference type="NCBIfam" id="NF009905">
    <property type="entry name" value="PRK13368.1"/>
    <property type="match status" value="1"/>
</dbReference>
<dbReference type="PANTHER" id="PTHR42866">
    <property type="entry name" value="3-DEOXY-MANNO-OCTULOSONATE CYTIDYLYLTRANSFERASE"/>
    <property type="match status" value="1"/>
</dbReference>
<dbReference type="PANTHER" id="PTHR42866:SF2">
    <property type="entry name" value="3-DEOXY-MANNO-OCTULOSONATE CYTIDYLYLTRANSFERASE, MITOCHONDRIAL"/>
    <property type="match status" value="1"/>
</dbReference>
<dbReference type="Pfam" id="PF02348">
    <property type="entry name" value="CTP_transf_3"/>
    <property type="match status" value="1"/>
</dbReference>
<dbReference type="SUPFAM" id="SSF53448">
    <property type="entry name" value="Nucleotide-diphospho-sugar transferases"/>
    <property type="match status" value="1"/>
</dbReference>
<keyword id="KW-0963">Cytoplasm</keyword>
<keyword id="KW-0448">Lipopolysaccharide biosynthesis</keyword>
<keyword id="KW-0548">Nucleotidyltransferase</keyword>
<keyword id="KW-1185">Reference proteome</keyword>
<keyword id="KW-0808">Transferase</keyword>
<gene>
    <name evidence="1" type="primary">kdsB</name>
    <name type="ordered locus">NIS_0993</name>
</gene>
<protein>
    <recommendedName>
        <fullName evidence="1">3-deoxy-manno-octulosonate cytidylyltransferase</fullName>
        <ecNumber evidence="1">2.7.7.38</ecNumber>
    </recommendedName>
    <alternativeName>
        <fullName evidence="1">CMP-2-keto-3-deoxyoctulosonic acid synthase</fullName>
        <shortName evidence="1">CKS</shortName>
        <shortName evidence="1">CMP-KDO synthase</shortName>
    </alternativeName>
</protein>
<proteinExistence type="inferred from homology"/>